<proteinExistence type="predicted"/>
<protein>
    <recommendedName>
        <fullName>GATA zinc finger domain-containing protein 6</fullName>
    </recommendedName>
</protein>
<sequence>MEFQEALKYIPSNSICSNPNYKLIWKKIQQYSYEVNSSSSLILSDISSSSYDLSGIFEKSLMIFLMIENFTTQYSNQSYLYRFLNEPPINNNNNNTKSEFQQIITDPSNKESLKSLLQFSKTINISKIFENNTQPIIISPPQQSQQPPPPTSGNNFFSILSSNINTINNNSNNNNNNNNCKSYKKQQTSKGSATASTNTTTDIYDEQQMKLQQLQQQYYQQQLNELQQINQQISQKVNLLQQTTPTTTNTSTTATTTTIPPSPSNTTTTTTNNNNNNIPQQTSISTASTSIKIISEDGVSNNKRKRRPRAPAPFLDSLYCHSCGETQTSQWRRGPDGCKSLCNACGIRFANIVSKEKALAVKEKNISINMLLNESSNQQQQQQQQQQQQQIIQQQQIIQQQQQKDDHLPLSRPSSFSSQSNSQQDDSLPLSRPSSFSSQSSSSSSSFLSSLLSSSSPPIPSTTTTTTTTTTTTSPTISSESLNFSSATNTPTNLSPNLQSINHNDKLINNNNNNNTALEGFPPTFNINNYNNNNNIDKLSSSKDSTENNGYNYYSSYNNYNISEYVPSPAYQNSRMTNVGIGSFKRKLSNEDQLNGLSAIVTASEQLFFGISNDVNQGSNVKL</sequence>
<accession>Q55EQ0</accession>
<evidence type="ECO:0000255" key="1">
    <source>
        <dbReference type="PROSITE-ProRule" id="PRU00094"/>
    </source>
</evidence>
<evidence type="ECO:0000256" key="2">
    <source>
        <dbReference type="SAM" id="MobiDB-lite"/>
    </source>
</evidence>
<feature type="chain" id="PRO_0000330439" description="GATA zinc finger domain-containing protein 6">
    <location>
        <begin position="1"/>
        <end position="623"/>
    </location>
</feature>
<feature type="zinc finger region" description="GATA-type" evidence="1">
    <location>
        <begin position="320"/>
        <end position="345"/>
    </location>
</feature>
<feature type="region of interest" description="Disordered" evidence="2">
    <location>
        <begin position="137"/>
        <end position="156"/>
    </location>
</feature>
<feature type="region of interest" description="Disordered" evidence="2">
    <location>
        <begin position="167"/>
        <end position="197"/>
    </location>
</feature>
<feature type="region of interest" description="Disordered" evidence="2">
    <location>
        <begin position="245"/>
        <end position="289"/>
    </location>
</feature>
<feature type="region of interest" description="Disordered" evidence="2">
    <location>
        <begin position="398"/>
        <end position="509"/>
    </location>
</feature>
<feature type="compositionally biased region" description="Low complexity" evidence="2">
    <location>
        <begin position="167"/>
        <end position="179"/>
    </location>
</feature>
<feature type="compositionally biased region" description="Polar residues" evidence="2">
    <location>
        <begin position="185"/>
        <end position="197"/>
    </location>
</feature>
<feature type="compositionally biased region" description="Low complexity" evidence="2">
    <location>
        <begin position="410"/>
        <end position="482"/>
    </location>
</feature>
<feature type="compositionally biased region" description="Polar residues" evidence="2">
    <location>
        <begin position="483"/>
        <end position="502"/>
    </location>
</feature>
<gene>
    <name type="primary">gtaF</name>
    <name type="ORF">DDB_G0268792</name>
</gene>
<organism>
    <name type="scientific">Dictyostelium discoideum</name>
    <name type="common">Social amoeba</name>
    <dbReference type="NCBI Taxonomy" id="44689"/>
    <lineage>
        <taxon>Eukaryota</taxon>
        <taxon>Amoebozoa</taxon>
        <taxon>Evosea</taxon>
        <taxon>Eumycetozoa</taxon>
        <taxon>Dictyostelia</taxon>
        <taxon>Dictyosteliales</taxon>
        <taxon>Dictyosteliaceae</taxon>
        <taxon>Dictyostelium</taxon>
    </lineage>
</organism>
<dbReference type="EMBL" id="AAFI02000004">
    <property type="protein sequence ID" value="EAL72985.1"/>
    <property type="molecule type" value="Genomic_DNA"/>
</dbReference>
<dbReference type="RefSeq" id="XP_646970.1">
    <property type="nucleotide sequence ID" value="XM_641878.1"/>
</dbReference>
<dbReference type="FunCoup" id="Q55EQ0">
    <property type="interactions" value="435"/>
</dbReference>
<dbReference type="GlyGen" id="Q55EQ0">
    <property type="glycosylation" value="1 site"/>
</dbReference>
<dbReference type="PaxDb" id="44689-DDB0220472"/>
<dbReference type="EnsemblProtists" id="EAL72985">
    <property type="protein sequence ID" value="EAL72985"/>
    <property type="gene ID" value="DDB_G0268792"/>
</dbReference>
<dbReference type="GeneID" id="8616662"/>
<dbReference type="KEGG" id="ddi:DDB_G0268792"/>
<dbReference type="dictyBase" id="DDB_G0268792">
    <property type="gene designation" value="gtaF"/>
</dbReference>
<dbReference type="VEuPathDB" id="AmoebaDB:DDB_G0268792"/>
<dbReference type="eggNOG" id="KOG1601">
    <property type="taxonomic scope" value="Eukaryota"/>
</dbReference>
<dbReference type="HOGENOM" id="CLU_439057_0_0_1"/>
<dbReference type="InParanoid" id="Q55EQ0"/>
<dbReference type="OMA" id="MIFLMIE"/>
<dbReference type="PRO" id="PR:Q55EQ0"/>
<dbReference type="Proteomes" id="UP000002195">
    <property type="component" value="Chromosome 1"/>
</dbReference>
<dbReference type="GO" id="GO:0005634">
    <property type="term" value="C:nucleus"/>
    <property type="evidence" value="ECO:0000318"/>
    <property type="project" value="GO_Central"/>
</dbReference>
<dbReference type="GO" id="GO:0000976">
    <property type="term" value="F:transcription cis-regulatory region binding"/>
    <property type="evidence" value="ECO:0000318"/>
    <property type="project" value="GO_Central"/>
</dbReference>
<dbReference type="GO" id="GO:0008270">
    <property type="term" value="F:zinc ion binding"/>
    <property type="evidence" value="ECO:0007669"/>
    <property type="project" value="UniProtKB-KW"/>
</dbReference>
<dbReference type="GO" id="GO:0006357">
    <property type="term" value="P:regulation of transcription by RNA polymerase II"/>
    <property type="evidence" value="ECO:0000318"/>
    <property type="project" value="GO_Central"/>
</dbReference>
<dbReference type="CDD" id="cd00202">
    <property type="entry name" value="ZnF_GATA"/>
    <property type="match status" value="1"/>
</dbReference>
<dbReference type="Gene3D" id="3.30.50.10">
    <property type="entry name" value="Erythroid Transcription Factor GATA-1, subunit A"/>
    <property type="match status" value="1"/>
</dbReference>
<dbReference type="InterPro" id="IPR051140">
    <property type="entry name" value="GATA_TF"/>
</dbReference>
<dbReference type="InterPro" id="IPR000679">
    <property type="entry name" value="Znf_GATA"/>
</dbReference>
<dbReference type="InterPro" id="IPR013088">
    <property type="entry name" value="Znf_NHR/GATA"/>
</dbReference>
<dbReference type="PANTHER" id="PTHR45658">
    <property type="entry name" value="GATA TRANSCRIPTION FACTOR"/>
    <property type="match status" value="1"/>
</dbReference>
<dbReference type="PANTHER" id="PTHR45658:SF122">
    <property type="entry name" value="GATA ZINC FINGER DOMAIN-CONTAINING PROTEIN 6"/>
    <property type="match status" value="1"/>
</dbReference>
<dbReference type="Pfam" id="PF00320">
    <property type="entry name" value="GATA"/>
    <property type="match status" value="1"/>
</dbReference>
<dbReference type="SMART" id="SM00401">
    <property type="entry name" value="ZnF_GATA"/>
    <property type="match status" value="1"/>
</dbReference>
<dbReference type="SUPFAM" id="SSF57716">
    <property type="entry name" value="Glucocorticoid receptor-like (DNA-binding domain)"/>
    <property type="match status" value="1"/>
</dbReference>
<dbReference type="PROSITE" id="PS00344">
    <property type="entry name" value="GATA_ZN_FINGER_1"/>
    <property type="match status" value="1"/>
</dbReference>
<dbReference type="PROSITE" id="PS50114">
    <property type="entry name" value="GATA_ZN_FINGER_2"/>
    <property type="match status" value="1"/>
</dbReference>
<keyword id="KW-0479">Metal-binding</keyword>
<keyword id="KW-1185">Reference proteome</keyword>
<keyword id="KW-0862">Zinc</keyword>
<keyword id="KW-0863">Zinc-finger</keyword>
<name>GTAF_DICDI</name>
<reference key="1">
    <citation type="journal article" date="2005" name="Nature">
        <title>The genome of the social amoeba Dictyostelium discoideum.</title>
        <authorList>
            <person name="Eichinger L."/>
            <person name="Pachebat J.A."/>
            <person name="Gloeckner G."/>
            <person name="Rajandream M.A."/>
            <person name="Sucgang R."/>
            <person name="Berriman M."/>
            <person name="Song J."/>
            <person name="Olsen R."/>
            <person name="Szafranski K."/>
            <person name="Xu Q."/>
            <person name="Tunggal B."/>
            <person name="Kummerfeld S."/>
            <person name="Madera M."/>
            <person name="Konfortov B.A."/>
            <person name="Rivero F."/>
            <person name="Bankier A.T."/>
            <person name="Lehmann R."/>
            <person name="Hamlin N."/>
            <person name="Davies R."/>
            <person name="Gaudet P."/>
            <person name="Fey P."/>
            <person name="Pilcher K."/>
            <person name="Chen G."/>
            <person name="Saunders D."/>
            <person name="Sodergren E.J."/>
            <person name="Davis P."/>
            <person name="Kerhornou A."/>
            <person name="Nie X."/>
            <person name="Hall N."/>
            <person name="Anjard C."/>
            <person name="Hemphill L."/>
            <person name="Bason N."/>
            <person name="Farbrother P."/>
            <person name="Desany B."/>
            <person name="Just E."/>
            <person name="Morio T."/>
            <person name="Rost R."/>
            <person name="Churcher C.M."/>
            <person name="Cooper J."/>
            <person name="Haydock S."/>
            <person name="van Driessche N."/>
            <person name="Cronin A."/>
            <person name="Goodhead I."/>
            <person name="Muzny D.M."/>
            <person name="Mourier T."/>
            <person name="Pain A."/>
            <person name="Lu M."/>
            <person name="Harper D."/>
            <person name="Lindsay R."/>
            <person name="Hauser H."/>
            <person name="James K.D."/>
            <person name="Quiles M."/>
            <person name="Madan Babu M."/>
            <person name="Saito T."/>
            <person name="Buchrieser C."/>
            <person name="Wardroper A."/>
            <person name="Felder M."/>
            <person name="Thangavelu M."/>
            <person name="Johnson D."/>
            <person name="Knights A."/>
            <person name="Loulseged H."/>
            <person name="Mungall K.L."/>
            <person name="Oliver K."/>
            <person name="Price C."/>
            <person name="Quail M.A."/>
            <person name="Urushihara H."/>
            <person name="Hernandez J."/>
            <person name="Rabbinowitsch E."/>
            <person name="Steffen D."/>
            <person name="Sanders M."/>
            <person name="Ma J."/>
            <person name="Kohara Y."/>
            <person name="Sharp S."/>
            <person name="Simmonds M.N."/>
            <person name="Spiegler S."/>
            <person name="Tivey A."/>
            <person name="Sugano S."/>
            <person name="White B."/>
            <person name="Walker D."/>
            <person name="Woodward J.R."/>
            <person name="Winckler T."/>
            <person name="Tanaka Y."/>
            <person name="Shaulsky G."/>
            <person name="Schleicher M."/>
            <person name="Weinstock G.M."/>
            <person name="Rosenthal A."/>
            <person name="Cox E.C."/>
            <person name="Chisholm R.L."/>
            <person name="Gibbs R.A."/>
            <person name="Loomis W.F."/>
            <person name="Platzer M."/>
            <person name="Kay R.R."/>
            <person name="Williams J.G."/>
            <person name="Dear P.H."/>
            <person name="Noegel A.A."/>
            <person name="Barrell B.G."/>
            <person name="Kuspa A."/>
        </authorList>
    </citation>
    <scope>NUCLEOTIDE SEQUENCE [LARGE SCALE GENOMIC DNA]</scope>
    <source>
        <strain>AX4</strain>
    </source>
</reference>